<proteinExistence type="inferred from homology"/>
<dbReference type="EC" id="5.4.99.32"/>
<dbReference type="EMBL" id="DS989831">
    <property type="protein sequence ID" value="EFQ96704.1"/>
    <property type="molecule type" value="Genomic_DNA"/>
</dbReference>
<dbReference type="RefSeq" id="XP_003169081.1">
    <property type="nucleotide sequence ID" value="XM_003169033.1"/>
</dbReference>
<dbReference type="SMR" id="E4V6I8"/>
<dbReference type="STRING" id="535722.E4V6I8"/>
<dbReference type="GeneID" id="10024264"/>
<dbReference type="VEuPathDB" id="FungiDB:MGYG_08628"/>
<dbReference type="eggNOG" id="KOG0497">
    <property type="taxonomic scope" value="Eukaryota"/>
</dbReference>
<dbReference type="HOGENOM" id="CLU_009074_2_1_1"/>
<dbReference type="InParanoid" id="E4V6I8"/>
<dbReference type="OMA" id="CYDDSTC"/>
<dbReference type="OrthoDB" id="21502at2759"/>
<dbReference type="Proteomes" id="UP000002669">
    <property type="component" value="Unassembled WGS sequence"/>
</dbReference>
<dbReference type="GO" id="GO:0005811">
    <property type="term" value="C:lipid droplet"/>
    <property type="evidence" value="ECO:0007669"/>
    <property type="project" value="InterPro"/>
</dbReference>
<dbReference type="GO" id="GO:0000250">
    <property type="term" value="F:lanosterol synthase activity"/>
    <property type="evidence" value="ECO:0007669"/>
    <property type="project" value="TreeGrafter"/>
</dbReference>
<dbReference type="GO" id="GO:0006696">
    <property type="term" value="P:ergosterol biosynthetic process"/>
    <property type="evidence" value="ECO:0007669"/>
    <property type="project" value="TreeGrafter"/>
</dbReference>
<dbReference type="GO" id="GO:0016104">
    <property type="term" value="P:triterpenoid biosynthetic process"/>
    <property type="evidence" value="ECO:0007669"/>
    <property type="project" value="InterPro"/>
</dbReference>
<dbReference type="CDD" id="cd02892">
    <property type="entry name" value="SQCY_1"/>
    <property type="match status" value="1"/>
</dbReference>
<dbReference type="FunFam" id="1.50.10.20:FF:000002">
    <property type="entry name" value="Terpene cyclase/mutase family member"/>
    <property type="match status" value="1"/>
</dbReference>
<dbReference type="Gene3D" id="1.50.10.20">
    <property type="match status" value="2"/>
</dbReference>
<dbReference type="Gene3D" id="6.20.120.20">
    <property type="match status" value="1"/>
</dbReference>
<dbReference type="InterPro" id="IPR032696">
    <property type="entry name" value="SQ_cyclase_C"/>
</dbReference>
<dbReference type="InterPro" id="IPR032697">
    <property type="entry name" value="SQ_cyclase_N"/>
</dbReference>
<dbReference type="InterPro" id="IPR018333">
    <property type="entry name" value="Squalene_cyclase"/>
</dbReference>
<dbReference type="InterPro" id="IPR008930">
    <property type="entry name" value="Terpenoid_cyclase/PrenylTrfase"/>
</dbReference>
<dbReference type="NCBIfam" id="TIGR01787">
    <property type="entry name" value="squalene_cyclas"/>
    <property type="match status" value="1"/>
</dbReference>
<dbReference type="PANTHER" id="PTHR11764:SF20">
    <property type="entry name" value="LANOSTEROL SYNTHASE"/>
    <property type="match status" value="1"/>
</dbReference>
<dbReference type="PANTHER" id="PTHR11764">
    <property type="entry name" value="TERPENE CYCLASE/MUTASE FAMILY MEMBER"/>
    <property type="match status" value="1"/>
</dbReference>
<dbReference type="Pfam" id="PF13243">
    <property type="entry name" value="SQHop_cyclase_C"/>
    <property type="match status" value="1"/>
</dbReference>
<dbReference type="Pfam" id="PF13249">
    <property type="entry name" value="SQHop_cyclase_N"/>
    <property type="match status" value="1"/>
</dbReference>
<dbReference type="SFLD" id="SFLDG01016">
    <property type="entry name" value="Prenyltransferase_Like_2"/>
    <property type="match status" value="1"/>
</dbReference>
<dbReference type="SUPFAM" id="SSF48239">
    <property type="entry name" value="Terpenoid cyclases/Protein prenyltransferases"/>
    <property type="match status" value="2"/>
</dbReference>
<sequence length="735" mass="82905">MPVADIEMVTGSAGHVDSKAASEYGTDLRRWRLKVHEGRHMWEYVDEDVAQTQQQTFAENYWLGQEYELPKMSTPIFAQDALDNGWAFFKRLQTQDGHWGCHDDGPLFVTSGIVISSYICGITLPDAMKNEMIRYLLNFVNEDGGWGLWINSPSTVFGTTMNYTMLRILGVPSTHPALLDARDTLLKMGSARALPTWGKFWMCALGAYEWDGMIPLAPEPLLAPGFLPLNPGNWWVHTRNVFVSMSYLFGHRFSAPMTPLIQELREELYDMPYHKIDWFAQQTNISDYDRLHPPTMLQKGLANALCYYEYVKVPYLRRKALDEALFQVEMEVHNTSYLCIAPVSFASNMLVMFHAHGANSHWVKGMADRIIDPMWMCREGMAASGTNGTSVWDTALTVQAALDGGLAQRPENHNTMLEALKFIEVSQITENPLGVSQGYRQPTKGAWPFSTRDQAYAVSDTTAVTVRAVIQLQALKSMPKLVSDERLAEAVDLIIGMENKCDGYSAFEPLRGPKALELLNITELYDNVMTESLYPECTSSVLLCLDTFTKAYPHHRPVEIQSIMARCARYLIKAQFPCGGWLASWGVCFTYATMFALQGLETVGLRESNSETCRNACSFLLQYQNDDGGWGEDLISIREKRYIQDPAGSQVTCTAYALMGLISAHCSNRDALRRGIRWLMRAQQATGEWLPGSLEGIFACPGGMRYPNYKFHFTLSAIGRYIERYGDEALYLKEQ</sequence>
<accession>E4V6I8</accession>
<feature type="chain" id="PRO_0000415498" description="Protostadienol synthase A">
    <location>
        <begin position="1"/>
        <end position="735"/>
    </location>
</feature>
<feature type="repeat" description="PFTB 1">
    <location>
        <begin position="129"/>
        <end position="170"/>
    </location>
</feature>
<feature type="repeat" description="PFTB 2">
    <location>
        <begin position="487"/>
        <end position="528"/>
    </location>
</feature>
<feature type="repeat" description="PFTB 3">
    <location>
        <begin position="564"/>
        <end position="604"/>
    </location>
</feature>
<feature type="repeat" description="PFTB 4">
    <location>
        <begin position="613"/>
        <end position="660"/>
    </location>
</feature>
<feature type="active site" description="Proton donor" evidence="2">
    <location>
        <position position="460"/>
    </location>
</feature>
<evidence type="ECO:0000250" key="1"/>
<evidence type="ECO:0000250" key="2">
    <source>
        <dbReference type="UniProtKB" id="P48449"/>
    </source>
</evidence>
<evidence type="ECO:0000305" key="3"/>
<protein>
    <recommendedName>
        <fullName>Protostadienol synthase A</fullName>
        <ecNumber>5.4.99.32</ecNumber>
    </recommendedName>
</protein>
<comment type="function">
    <text evidence="1">Protostadienol synthase which cyclizes (3S)-oxidosqualene to (17Z)-protosta-17(20),24-dien-3-beta-ol (protostadienol), the biosynthetic precursor of helvolic acid, a secondary metabolite which promotes virulence.</text>
</comment>
<comment type="catalytic activity">
    <reaction>
        <text>(S)-2,3-epoxysqualene = (17Z)-protosta-17(20),24-dien-3beta-ol</text>
        <dbReference type="Rhea" id="RHEA:30987"/>
        <dbReference type="ChEBI" id="CHEBI:15441"/>
        <dbReference type="ChEBI" id="CHEBI:62457"/>
        <dbReference type="EC" id="5.4.99.32"/>
    </reaction>
</comment>
<comment type="similarity">
    <text evidence="3">Belongs to the terpene cyclase/mutase family.</text>
</comment>
<name>PDSA_ARTGP</name>
<gene>
    <name type="primary">PDSA</name>
    <name type="ORF">MGYG_08628</name>
</gene>
<organism>
    <name type="scientific">Arthroderma gypseum (strain ATCC MYA-4604 / CBS 118893)</name>
    <name type="common">Microsporum gypseum</name>
    <dbReference type="NCBI Taxonomy" id="535722"/>
    <lineage>
        <taxon>Eukaryota</taxon>
        <taxon>Fungi</taxon>
        <taxon>Dikarya</taxon>
        <taxon>Ascomycota</taxon>
        <taxon>Pezizomycotina</taxon>
        <taxon>Eurotiomycetes</taxon>
        <taxon>Eurotiomycetidae</taxon>
        <taxon>Onygenales</taxon>
        <taxon>Arthrodermataceae</taxon>
        <taxon>Nannizzia</taxon>
    </lineage>
</organism>
<keyword id="KW-0413">Isomerase</keyword>
<keyword id="KW-0444">Lipid biosynthesis</keyword>
<keyword id="KW-0443">Lipid metabolism</keyword>
<keyword id="KW-1185">Reference proteome</keyword>
<keyword id="KW-0677">Repeat</keyword>
<keyword id="KW-0752">Steroid biosynthesis</keyword>
<keyword id="KW-0843">Virulence</keyword>
<reference key="1">
    <citation type="journal article" date="2012" name="MBio">
        <title>Comparative genome analysis of Trichophyton rubrum and related dermatophytes reveals candidate genes involved in infection.</title>
        <authorList>
            <person name="Martinez D.A."/>
            <person name="Oliver B.G."/>
            <person name="Graeser Y."/>
            <person name="Goldberg J.M."/>
            <person name="Li W."/>
            <person name="Martinez-Rossi N.M."/>
            <person name="Monod M."/>
            <person name="Shelest E."/>
            <person name="Barton R.C."/>
            <person name="Birch E."/>
            <person name="Brakhage A.A."/>
            <person name="Chen Z."/>
            <person name="Gurr S.J."/>
            <person name="Heiman D."/>
            <person name="Heitman J."/>
            <person name="Kosti I."/>
            <person name="Rossi A."/>
            <person name="Saif S."/>
            <person name="Samalova M."/>
            <person name="Saunders C.W."/>
            <person name="Shea T."/>
            <person name="Summerbell R.C."/>
            <person name="Xu J."/>
            <person name="Young S."/>
            <person name="Zeng Q."/>
            <person name="Birren B.W."/>
            <person name="Cuomo C.A."/>
            <person name="White T.C."/>
        </authorList>
    </citation>
    <scope>NUCLEOTIDE SEQUENCE [LARGE SCALE GENOMIC DNA]</scope>
    <source>
        <strain>ATCC MYA-4604 / CBS 118893</strain>
    </source>
</reference>